<feature type="chain" id="PRO_0000313814" description="Rieske domain-containing protein">
    <location>
        <begin position="1"/>
        <end position="157"/>
    </location>
</feature>
<feature type="domain" description="Rieske 1" evidence="2">
    <location>
        <begin position="16"/>
        <end position="127"/>
    </location>
</feature>
<feature type="domain" description="Rieske 2" evidence="2">
    <location>
        <begin position="17"/>
        <end position="131"/>
    </location>
</feature>
<feature type="binding site">
    <location>
        <position position="57"/>
    </location>
    <ligand>
        <name>[2Fe-2S] cluster</name>
        <dbReference type="ChEBI" id="CHEBI:190135"/>
    </ligand>
</feature>
<feature type="binding site">
    <location>
        <position position="59"/>
    </location>
    <ligand>
        <name>[2Fe-2S] cluster</name>
        <dbReference type="ChEBI" id="CHEBI:190135"/>
    </ligand>
</feature>
<feature type="binding site">
    <location>
        <position position="80"/>
    </location>
    <ligand>
        <name>[2Fe-2S] cluster</name>
        <dbReference type="ChEBI" id="CHEBI:190135"/>
    </ligand>
</feature>
<feature type="binding site">
    <location>
        <position position="83"/>
    </location>
    <ligand>
        <name>[2Fe-2S] cluster</name>
        <dbReference type="ChEBI" id="CHEBI:190135"/>
    </ligand>
</feature>
<feature type="modified residue" description="N-acetylmethionine" evidence="1">
    <location>
        <position position="1"/>
    </location>
</feature>
<feature type="modified residue" description="Phosphoserine" evidence="1">
    <location>
        <position position="6"/>
    </location>
</feature>
<feature type="splice variant" id="VSP_030156" description="In isoform 2." evidence="3">
    <original>DFNGQSCIVCPWHKYKITLATGEGLYQSINPKDPSAKPKW</original>
    <variation>VCKIKFTLNKFNVSYILSILFYSLFRLIFIIILAYSYLKM</variation>
    <location>
        <begin position="71"/>
        <end position="110"/>
    </location>
</feature>
<feature type="splice variant" id="VSP_030157" description="In isoform 2." evidence="3">
    <location>
        <begin position="111"/>
        <end position="157"/>
    </location>
</feature>
<feature type="strand" evidence="4">
    <location>
        <begin position="18"/>
        <end position="22"/>
    </location>
</feature>
<feature type="helix" evidence="4">
    <location>
        <begin position="23"/>
        <end position="29"/>
    </location>
</feature>
<feature type="strand" evidence="4">
    <location>
        <begin position="30"/>
        <end position="36"/>
    </location>
</feature>
<feature type="strand" evidence="4">
    <location>
        <begin position="39"/>
        <end position="46"/>
    </location>
</feature>
<feature type="strand" evidence="4">
    <location>
        <begin position="49"/>
        <end position="56"/>
    </location>
</feature>
<feature type="turn" evidence="4">
    <location>
        <begin position="58"/>
        <end position="60"/>
    </location>
</feature>
<feature type="helix" evidence="4">
    <location>
        <begin position="64"/>
        <end position="66"/>
    </location>
</feature>
<feature type="strand" evidence="4">
    <location>
        <begin position="67"/>
        <end position="72"/>
    </location>
</feature>
<feature type="strand" evidence="4">
    <location>
        <begin position="75"/>
        <end position="79"/>
    </location>
</feature>
<feature type="turn" evidence="4">
    <location>
        <begin position="81"/>
        <end position="83"/>
    </location>
</feature>
<feature type="strand" evidence="4">
    <location>
        <begin position="86"/>
        <end position="88"/>
    </location>
</feature>
<feature type="turn" evidence="4">
    <location>
        <begin position="89"/>
        <end position="91"/>
    </location>
</feature>
<feature type="strand" evidence="4">
    <location>
        <begin position="93"/>
        <end position="98"/>
    </location>
</feature>
<feature type="strand" evidence="4">
    <location>
        <begin position="109"/>
        <end position="115"/>
    </location>
</feature>
<feature type="strand" evidence="4">
    <location>
        <begin position="119"/>
        <end position="125"/>
    </location>
</feature>
<feature type="strand" evidence="4">
    <location>
        <begin position="128"/>
        <end position="132"/>
    </location>
</feature>
<feature type="helix" evidence="4">
    <location>
        <begin position="141"/>
        <end position="145"/>
    </location>
</feature>
<feature type="strand" evidence="4">
    <location>
        <begin position="147"/>
        <end position="149"/>
    </location>
</feature>
<sequence>MDPEISEQDEEKKKYTSVCVGREEDIRKSERMTAVVHDREVVIFYHKGEYHAMDIRCYHSGGPLHLGEIEDFNGQSCIVCPWHKYKITLATGEGLYQSINPKDPSAKPKWCSKGVKQRIHTVKVDNGNIYVTLSKEPFKCDSDYYATGEFKVIQSSS</sequence>
<reference key="1">
    <citation type="journal article" date="2005" name="Science">
        <title>The transcriptional landscape of the mammalian genome.</title>
        <authorList>
            <person name="Carninci P."/>
            <person name="Kasukawa T."/>
            <person name="Katayama S."/>
            <person name="Gough J."/>
            <person name="Frith M.C."/>
            <person name="Maeda N."/>
            <person name="Oyama R."/>
            <person name="Ravasi T."/>
            <person name="Lenhard B."/>
            <person name="Wells C."/>
            <person name="Kodzius R."/>
            <person name="Shimokawa K."/>
            <person name="Bajic V.B."/>
            <person name="Brenner S.E."/>
            <person name="Batalov S."/>
            <person name="Forrest A.R."/>
            <person name="Zavolan M."/>
            <person name="Davis M.J."/>
            <person name="Wilming L.G."/>
            <person name="Aidinis V."/>
            <person name="Allen J.E."/>
            <person name="Ambesi-Impiombato A."/>
            <person name="Apweiler R."/>
            <person name="Aturaliya R.N."/>
            <person name="Bailey T.L."/>
            <person name="Bansal M."/>
            <person name="Baxter L."/>
            <person name="Beisel K.W."/>
            <person name="Bersano T."/>
            <person name="Bono H."/>
            <person name="Chalk A.M."/>
            <person name="Chiu K.P."/>
            <person name="Choudhary V."/>
            <person name="Christoffels A."/>
            <person name="Clutterbuck D.R."/>
            <person name="Crowe M.L."/>
            <person name="Dalla E."/>
            <person name="Dalrymple B.P."/>
            <person name="de Bono B."/>
            <person name="Della Gatta G."/>
            <person name="di Bernardo D."/>
            <person name="Down T."/>
            <person name="Engstrom P."/>
            <person name="Fagiolini M."/>
            <person name="Faulkner G."/>
            <person name="Fletcher C.F."/>
            <person name="Fukushima T."/>
            <person name="Furuno M."/>
            <person name="Futaki S."/>
            <person name="Gariboldi M."/>
            <person name="Georgii-Hemming P."/>
            <person name="Gingeras T.R."/>
            <person name="Gojobori T."/>
            <person name="Green R.E."/>
            <person name="Gustincich S."/>
            <person name="Harbers M."/>
            <person name="Hayashi Y."/>
            <person name="Hensch T.K."/>
            <person name="Hirokawa N."/>
            <person name="Hill D."/>
            <person name="Huminiecki L."/>
            <person name="Iacono M."/>
            <person name="Ikeo K."/>
            <person name="Iwama A."/>
            <person name="Ishikawa T."/>
            <person name="Jakt M."/>
            <person name="Kanapin A."/>
            <person name="Katoh M."/>
            <person name="Kawasawa Y."/>
            <person name="Kelso J."/>
            <person name="Kitamura H."/>
            <person name="Kitano H."/>
            <person name="Kollias G."/>
            <person name="Krishnan S.P."/>
            <person name="Kruger A."/>
            <person name="Kummerfeld S.K."/>
            <person name="Kurochkin I.V."/>
            <person name="Lareau L.F."/>
            <person name="Lazarevic D."/>
            <person name="Lipovich L."/>
            <person name="Liu J."/>
            <person name="Liuni S."/>
            <person name="McWilliam S."/>
            <person name="Madan Babu M."/>
            <person name="Madera M."/>
            <person name="Marchionni L."/>
            <person name="Matsuda H."/>
            <person name="Matsuzawa S."/>
            <person name="Miki H."/>
            <person name="Mignone F."/>
            <person name="Miyake S."/>
            <person name="Morris K."/>
            <person name="Mottagui-Tabar S."/>
            <person name="Mulder N."/>
            <person name="Nakano N."/>
            <person name="Nakauchi H."/>
            <person name="Ng P."/>
            <person name="Nilsson R."/>
            <person name="Nishiguchi S."/>
            <person name="Nishikawa S."/>
            <person name="Nori F."/>
            <person name="Ohara O."/>
            <person name="Okazaki Y."/>
            <person name="Orlando V."/>
            <person name="Pang K.C."/>
            <person name="Pavan W.J."/>
            <person name="Pavesi G."/>
            <person name="Pesole G."/>
            <person name="Petrovsky N."/>
            <person name="Piazza S."/>
            <person name="Reed J."/>
            <person name="Reid J.F."/>
            <person name="Ring B.Z."/>
            <person name="Ringwald M."/>
            <person name="Rost B."/>
            <person name="Ruan Y."/>
            <person name="Salzberg S.L."/>
            <person name="Sandelin A."/>
            <person name="Schneider C."/>
            <person name="Schoenbach C."/>
            <person name="Sekiguchi K."/>
            <person name="Semple C.A."/>
            <person name="Seno S."/>
            <person name="Sessa L."/>
            <person name="Sheng Y."/>
            <person name="Shibata Y."/>
            <person name="Shimada H."/>
            <person name="Shimada K."/>
            <person name="Silva D."/>
            <person name="Sinclair B."/>
            <person name="Sperling S."/>
            <person name="Stupka E."/>
            <person name="Sugiura K."/>
            <person name="Sultana R."/>
            <person name="Takenaka Y."/>
            <person name="Taki K."/>
            <person name="Tammoja K."/>
            <person name="Tan S.L."/>
            <person name="Tang S."/>
            <person name="Taylor M.S."/>
            <person name="Tegner J."/>
            <person name="Teichmann S.A."/>
            <person name="Ueda H.R."/>
            <person name="van Nimwegen E."/>
            <person name="Verardo R."/>
            <person name="Wei C.L."/>
            <person name="Yagi K."/>
            <person name="Yamanishi H."/>
            <person name="Zabarovsky E."/>
            <person name="Zhu S."/>
            <person name="Zimmer A."/>
            <person name="Hide W."/>
            <person name="Bult C."/>
            <person name="Grimmond S.M."/>
            <person name="Teasdale R.D."/>
            <person name="Liu E.T."/>
            <person name="Brusic V."/>
            <person name="Quackenbush J."/>
            <person name="Wahlestedt C."/>
            <person name="Mattick J.S."/>
            <person name="Hume D.A."/>
            <person name="Kai C."/>
            <person name="Sasaki D."/>
            <person name="Tomaru Y."/>
            <person name="Fukuda S."/>
            <person name="Kanamori-Katayama M."/>
            <person name="Suzuki M."/>
            <person name="Aoki J."/>
            <person name="Arakawa T."/>
            <person name="Iida J."/>
            <person name="Imamura K."/>
            <person name="Itoh M."/>
            <person name="Kato T."/>
            <person name="Kawaji H."/>
            <person name="Kawagashira N."/>
            <person name="Kawashima T."/>
            <person name="Kojima M."/>
            <person name="Kondo S."/>
            <person name="Konno H."/>
            <person name="Nakano K."/>
            <person name="Ninomiya N."/>
            <person name="Nishio T."/>
            <person name="Okada M."/>
            <person name="Plessy C."/>
            <person name="Shibata K."/>
            <person name="Shiraki T."/>
            <person name="Suzuki S."/>
            <person name="Tagami M."/>
            <person name="Waki K."/>
            <person name="Watahiki A."/>
            <person name="Okamura-Oho Y."/>
            <person name="Suzuki H."/>
            <person name="Kawai J."/>
            <person name="Hayashizaki Y."/>
        </authorList>
    </citation>
    <scope>NUCLEOTIDE SEQUENCE [LARGE SCALE MRNA] (ISOFORMS 1 AND 2)</scope>
    <source>
        <strain>C57BL/6J</strain>
        <tissue>Corpora quadrigemina</tissue>
        <tissue>Thymus</tissue>
    </source>
</reference>
<reference key="2">
    <citation type="journal article" date="2004" name="Genome Res.">
        <title>The status, quality, and expansion of the NIH full-length cDNA project: the Mammalian Gene Collection (MGC).</title>
        <authorList>
            <consortium name="The MGC Project Team"/>
        </authorList>
    </citation>
    <scope>NUCLEOTIDE SEQUENCE [LARGE SCALE MRNA] (ISOFORM 1)</scope>
    <source>
        <strain>FVB/N-3</strain>
        <tissue>Mammary tumor</tissue>
    </source>
</reference>
<reference key="3">
    <citation type="journal article" date="2010" name="Cell">
        <title>A tissue-specific atlas of mouse protein phosphorylation and expression.</title>
        <authorList>
            <person name="Huttlin E.L."/>
            <person name="Jedrychowski M.P."/>
            <person name="Elias J.E."/>
            <person name="Goswami T."/>
            <person name="Rad R."/>
            <person name="Beausoleil S.A."/>
            <person name="Villen J."/>
            <person name="Haas W."/>
            <person name="Sowa M.E."/>
            <person name="Gygi S.P."/>
        </authorList>
    </citation>
    <scope>IDENTIFICATION BY MASS SPECTROMETRY [LARGE SCALE ANALYSIS]</scope>
    <source>
        <tissue>Liver</tissue>
        <tissue>Spleen</tissue>
        <tissue>Testis</tissue>
    </source>
</reference>
<reference key="4">
    <citation type="journal article" date="2008" name="Acta Crystallogr. D">
        <title>X-ray structure of a soluble Rieske-type ferredoxin from Mus musculus.</title>
        <authorList>
            <person name="Levin E.J."/>
            <person name="Elsen N.L."/>
            <person name="Seder K.D."/>
            <person name="McCoy J.G."/>
            <person name="Fox B.G."/>
            <person name="Phillips G.N. Jr."/>
        </authorList>
    </citation>
    <scope>X-RAY CRYSTALLOGRAPHY (2.07 ANGSTROMS) OF 2-157</scope>
    <scope>IRON-SULFUR BINDING SITES</scope>
</reference>
<evidence type="ECO:0000250" key="1">
    <source>
        <dbReference type="UniProtKB" id="Q8TAC1"/>
    </source>
</evidence>
<evidence type="ECO:0000255" key="2">
    <source>
        <dbReference type="PROSITE-ProRule" id="PRU00628"/>
    </source>
</evidence>
<evidence type="ECO:0000303" key="3">
    <source>
    </source>
</evidence>
<evidence type="ECO:0007829" key="4">
    <source>
        <dbReference type="PDB" id="3D89"/>
    </source>
</evidence>
<name>RFESD_MOUSE</name>
<comment type="cofactor">
    <cofactor evidence="2">
        <name>[2Fe-2S] cluster</name>
        <dbReference type="ChEBI" id="CHEBI:190135"/>
    </cofactor>
    <text evidence="2">Binds 1 [2Fe-2S] cluster per subunit.</text>
</comment>
<comment type="alternative products">
    <event type="alternative splicing"/>
    <isoform>
        <id>Q8K2P6-1</id>
        <name>1</name>
        <sequence type="displayed"/>
    </isoform>
    <isoform>
        <id>Q8K2P6-2</id>
        <name>2</name>
        <sequence type="described" ref="VSP_030156 VSP_030157"/>
    </isoform>
</comment>
<dbReference type="EMBL" id="AK040255">
    <property type="protein sequence ID" value="BAC30553.1"/>
    <property type="molecule type" value="mRNA"/>
</dbReference>
<dbReference type="EMBL" id="AK163574">
    <property type="protein sequence ID" value="BAE37403.1"/>
    <property type="molecule type" value="mRNA"/>
</dbReference>
<dbReference type="EMBL" id="BC030381">
    <property type="protein sequence ID" value="AAH30381.1"/>
    <property type="molecule type" value="mRNA"/>
</dbReference>
<dbReference type="CCDS" id="CCDS26654.1">
    <molecule id="Q8K2P6-1"/>
</dbReference>
<dbReference type="RefSeq" id="NP_001124540.1">
    <molecule id="Q8K2P6-1"/>
    <property type="nucleotide sequence ID" value="NM_001131068.1"/>
</dbReference>
<dbReference type="RefSeq" id="NP_001124541.1">
    <molecule id="Q8K2P6-1"/>
    <property type="nucleotide sequence ID" value="NM_001131069.1"/>
</dbReference>
<dbReference type="RefSeq" id="NP_849247.3">
    <molecule id="Q8K2P6-1"/>
    <property type="nucleotide sequence ID" value="NM_178916.5"/>
</dbReference>
<dbReference type="PDB" id="3D89">
    <property type="method" value="X-ray"/>
    <property type="resolution" value="2.07 A"/>
    <property type="chains" value="A=2-157"/>
</dbReference>
<dbReference type="PDBsum" id="3D89"/>
<dbReference type="SMR" id="Q8K2P6"/>
<dbReference type="FunCoup" id="Q8K2P6">
    <property type="interactions" value="10"/>
</dbReference>
<dbReference type="STRING" id="10090.ENSMUSP00000055763"/>
<dbReference type="PhosphoSitePlus" id="Q8K2P6"/>
<dbReference type="PaxDb" id="10090-ENSMUSP00000055763"/>
<dbReference type="ProteomicsDB" id="255294">
    <molecule id="Q8K2P6-1"/>
</dbReference>
<dbReference type="ProteomicsDB" id="255295">
    <molecule id="Q8K2P6-2"/>
</dbReference>
<dbReference type="Antibodypedia" id="4298">
    <property type="antibodies" value="174 antibodies from 18 providers"/>
</dbReference>
<dbReference type="DNASU" id="218341"/>
<dbReference type="Ensembl" id="ENSMUST00000050997.2">
    <molecule id="Q8K2P6-1"/>
    <property type="protein sequence ID" value="ENSMUSP00000055763.2"/>
    <property type="gene ID" value="ENSMUSG00000043190.15"/>
</dbReference>
<dbReference type="Ensembl" id="ENSMUST00000167271.9">
    <molecule id="Q8K2P6-1"/>
    <property type="protein sequence ID" value="ENSMUSP00000130366.2"/>
    <property type="gene ID" value="ENSMUSG00000043190.15"/>
</dbReference>
<dbReference type="Ensembl" id="ENSMUST00000179078.9">
    <molecule id="Q8K2P6-1"/>
    <property type="protein sequence ID" value="ENSMUSP00000136314.2"/>
    <property type="gene ID" value="ENSMUSG00000043190.15"/>
</dbReference>
<dbReference type="GeneID" id="218341"/>
<dbReference type="KEGG" id="mmu:218341"/>
<dbReference type="UCSC" id="uc007rgd.1">
    <molecule id="Q8K2P6-1"/>
    <property type="organism name" value="mouse"/>
</dbReference>
<dbReference type="AGR" id="MGI:2145198"/>
<dbReference type="CTD" id="317671"/>
<dbReference type="MGI" id="MGI:2145198">
    <property type="gene designation" value="Rfesd"/>
</dbReference>
<dbReference type="VEuPathDB" id="HostDB:ENSMUSG00000043190"/>
<dbReference type="eggNOG" id="ENOG502S06W">
    <property type="taxonomic scope" value="Eukaryota"/>
</dbReference>
<dbReference type="GeneTree" id="ENSGT00390000018225"/>
<dbReference type="HOGENOM" id="CLU_113767_2_0_1"/>
<dbReference type="InParanoid" id="Q8K2P6"/>
<dbReference type="OMA" id="SAVPKWC"/>
<dbReference type="OrthoDB" id="426882at2759"/>
<dbReference type="PhylomeDB" id="Q8K2P6"/>
<dbReference type="TreeFam" id="TF333320"/>
<dbReference type="BioGRID-ORCS" id="218341">
    <property type="hits" value="1 hit in 76 CRISPR screens"/>
</dbReference>
<dbReference type="ChiTaRS" id="Rfesd">
    <property type="organism name" value="mouse"/>
</dbReference>
<dbReference type="EvolutionaryTrace" id="Q8K2P6"/>
<dbReference type="PRO" id="PR:Q8K2P6"/>
<dbReference type="Proteomes" id="UP000000589">
    <property type="component" value="Chromosome 13"/>
</dbReference>
<dbReference type="RNAct" id="Q8K2P6">
    <property type="molecule type" value="protein"/>
</dbReference>
<dbReference type="Bgee" id="ENSMUSG00000043190">
    <property type="expression patterns" value="Expressed in spermatocyte and 229 other cell types or tissues"/>
</dbReference>
<dbReference type="GO" id="GO:0051537">
    <property type="term" value="F:2 iron, 2 sulfur cluster binding"/>
    <property type="evidence" value="ECO:0007669"/>
    <property type="project" value="UniProtKB-KW"/>
</dbReference>
<dbReference type="GO" id="GO:0046872">
    <property type="term" value="F:metal ion binding"/>
    <property type="evidence" value="ECO:0007669"/>
    <property type="project" value="UniProtKB-KW"/>
</dbReference>
<dbReference type="CDD" id="cd03467">
    <property type="entry name" value="Rieske"/>
    <property type="match status" value="1"/>
</dbReference>
<dbReference type="FunFam" id="2.102.10.10:FF:000009">
    <property type="entry name" value="Rieske Fe-S domain containing"/>
    <property type="match status" value="1"/>
</dbReference>
<dbReference type="Gene3D" id="2.102.10.10">
    <property type="entry name" value="Rieske [2Fe-2S] iron-sulphur domain"/>
    <property type="match status" value="1"/>
</dbReference>
<dbReference type="InterPro" id="IPR017941">
    <property type="entry name" value="Rieske_2Fe-2S"/>
</dbReference>
<dbReference type="InterPro" id="IPR036922">
    <property type="entry name" value="Rieske_2Fe-2S_sf"/>
</dbReference>
<dbReference type="InterPro" id="IPR054716">
    <property type="entry name" value="Sol_Rieske_ferrdox_dom"/>
</dbReference>
<dbReference type="PANTHER" id="PTHR21496">
    <property type="entry name" value="FERREDOXIN-RELATED"/>
    <property type="match status" value="1"/>
</dbReference>
<dbReference type="PANTHER" id="PTHR21496:SF0">
    <property type="entry name" value="RIESKE DOMAIN-CONTAINING PROTEIN"/>
    <property type="match status" value="1"/>
</dbReference>
<dbReference type="Pfam" id="PF22543">
    <property type="entry name" value="Rieske_4"/>
    <property type="match status" value="1"/>
</dbReference>
<dbReference type="SUPFAM" id="SSF50022">
    <property type="entry name" value="ISP domain"/>
    <property type="match status" value="1"/>
</dbReference>
<dbReference type="PROSITE" id="PS51296">
    <property type="entry name" value="RIESKE"/>
    <property type="match status" value="1"/>
</dbReference>
<proteinExistence type="evidence at protein level"/>
<organism>
    <name type="scientific">Mus musculus</name>
    <name type="common">Mouse</name>
    <dbReference type="NCBI Taxonomy" id="10090"/>
    <lineage>
        <taxon>Eukaryota</taxon>
        <taxon>Metazoa</taxon>
        <taxon>Chordata</taxon>
        <taxon>Craniata</taxon>
        <taxon>Vertebrata</taxon>
        <taxon>Euteleostomi</taxon>
        <taxon>Mammalia</taxon>
        <taxon>Eutheria</taxon>
        <taxon>Euarchontoglires</taxon>
        <taxon>Glires</taxon>
        <taxon>Rodentia</taxon>
        <taxon>Myomorpha</taxon>
        <taxon>Muroidea</taxon>
        <taxon>Muridae</taxon>
        <taxon>Murinae</taxon>
        <taxon>Mus</taxon>
        <taxon>Mus</taxon>
    </lineage>
</organism>
<protein>
    <recommendedName>
        <fullName>Rieske domain-containing protein</fullName>
    </recommendedName>
</protein>
<accession>Q8K2P6</accession>
<accession>Q3TQH9</accession>
<keyword id="KW-0001">2Fe-2S</keyword>
<keyword id="KW-0002">3D-structure</keyword>
<keyword id="KW-0007">Acetylation</keyword>
<keyword id="KW-0025">Alternative splicing</keyword>
<keyword id="KW-0408">Iron</keyword>
<keyword id="KW-0411">Iron-sulfur</keyword>
<keyword id="KW-0479">Metal-binding</keyword>
<keyword id="KW-0597">Phosphoprotein</keyword>
<keyword id="KW-1185">Reference proteome</keyword>
<keyword id="KW-0677">Repeat</keyword>
<gene>
    <name type="primary">Rfesd</name>
</gene>